<organismHost>
    <name type="scientific">Escherichia coli</name>
    <dbReference type="NCBI Taxonomy" id="562"/>
</organismHost>
<evidence type="ECO:0007829" key="1">
    <source>
        <dbReference type="PDB" id="7UJL"/>
    </source>
</evidence>
<evidence type="ECO:0007829" key="2">
    <source>
        <dbReference type="PDB" id="8TFU"/>
    </source>
</evidence>
<reference key="1">
    <citation type="journal article" date="1982" name="J. Mol. Biol.">
        <title>Nucleotide sequence of bacteriophage lambda DNA.</title>
        <authorList>
            <person name="Sanger F."/>
            <person name="Coulson A.R."/>
            <person name="Hong G.F."/>
            <person name="Hill D.F."/>
            <person name="Petersen G.B."/>
        </authorList>
    </citation>
    <scope>NUCLEOTIDE SEQUENCE [LARGE SCALE GENOMIC DNA]</scope>
</reference>
<reference key="2">
    <citation type="journal article" date="1981" name="Nucleic Acids Res.">
        <title>The DNA sequence of the phage lambda genome between PL and the gene bet.</title>
        <authorList>
            <person name="Ineichen K."/>
            <person name="Shepherd J.C.W."/>
            <person name="Bickle T.A."/>
        </authorList>
    </citation>
    <scope>NUCLEOTIDE SEQUENCE [GENOMIC DNA] OF 1-103</scope>
</reference>
<gene>
    <name type="primary">bet</name>
    <name type="synonym">betA</name>
    <name type="synonym">red-beta</name>
    <name type="synonym">redB</name>
</gene>
<sequence length="261" mass="29689">MSTALATLAGKLAERVGMDSVDPQELITTLRQTAFKGDASDAQFIALLIVANQYGLNPWTKEIYAFPDKQNGIVPVVGVDGWSRIINENQQFDGMDFEQDNESCTCRIYRKDRNHPICVTEWMDECRREPFKTREGREITGPWQSHPKRMLRHKAMIQCARLAFGFAGIYDKDEAERIVENTAYTAERQPERDITPVNDETMQEINTLLIALDKTWDDDLLPLCSQIFRRDIRASSELTQAEAVKALGFLKQKAAEQKVAA</sequence>
<organism>
    <name type="scientific">Escherichia phage lambda</name>
    <name type="common">Bacteriophage lambda</name>
    <dbReference type="NCBI Taxonomy" id="2681611"/>
    <lineage>
        <taxon>Viruses</taxon>
        <taxon>Duplodnaviria</taxon>
        <taxon>Heunggongvirae</taxon>
        <taxon>Uroviricota</taxon>
        <taxon>Caudoviricetes</taxon>
        <taxon>Lambdavirus</taxon>
        <taxon>Lambdavirus lambda</taxon>
    </lineage>
</organism>
<dbReference type="EMBL" id="J02459">
    <property type="protein sequence ID" value="AAA96570.1"/>
    <property type="molecule type" value="Genomic_DNA"/>
</dbReference>
<dbReference type="EMBL" id="V00638">
    <property type="protein sequence ID" value="CAA23976.1"/>
    <property type="molecule type" value="Genomic_DNA"/>
</dbReference>
<dbReference type="PIR" id="B94164">
    <property type="entry name" value="QBBPL"/>
</dbReference>
<dbReference type="RefSeq" id="NP_040617.1">
    <property type="nucleotide sequence ID" value="NC_001416.1"/>
</dbReference>
<dbReference type="PDB" id="6M9K">
    <property type="method" value="X-ray"/>
    <property type="resolution" value="2.30 A"/>
    <property type="chains" value="D/E/F=194-260"/>
</dbReference>
<dbReference type="PDB" id="7UJL">
    <property type="method" value="EM"/>
    <property type="resolution" value="3.30 A"/>
    <property type="chains" value="A=1-177"/>
</dbReference>
<dbReference type="PDB" id="8TFU">
    <property type="method" value="X-ray"/>
    <property type="resolution" value="1.48 A"/>
    <property type="chains" value="A/B=182-261"/>
</dbReference>
<dbReference type="PDB" id="8TG7">
    <property type="method" value="X-ray"/>
    <property type="resolution" value="1.77 A"/>
    <property type="chains" value="A/B=182-261"/>
</dbReference>
<dbReference type="PDB" id="8TG8">
    <property type="method" value="X-ray"/>
    <property type="resolution" value="1.58 A"/>
    <property type="chains" value="A=182-261"/>
</dbReference>
<dbReference type="PDB" id="8TGC">
    <property type="method" value="X-ray"/>
    <property type="resolution" value="1.48 A"/>
    <property type="chains" value="A/B=182-261"/>
</dbReference>
<dbReference type="PDBsum" id="6M9K"/>
<dbReference type="PDBsum" id="7UJL"/>
<dbReference type="PDBsum" id="8TFU"/>
<dbReference type="PDBsum" id="8TG7"/>
<dbReference type="PDBsum" id="8TG8"/>
<dbReference type="PDBsum" id="8TGC"/>
<dbReference type="EMDB" id="EMD-26566"/>
<dbReference type="SMR" id="P03698"/>
<dbReference type="DIP" id="DIP-61708N"/>
<dbReference type="IntAct" id="P03698">
    <property type="interactions" value="4"/>
</dbReference>
<dbReference type="GeneID" id="2703535"/>
<dbReference type="KEGG" id="vg:3827055"/>
<dbReference type="Proteomes" id="UP000001711">
    <property type="component" value="Genome"/>
</dbReference>
<dbReference type="GO" id="GO:0003677">
    <property type="term" value="F:DNA binding"/>
    <property type="evidence" value="ECO:0007669"/>
    <property type="project" value="UniProtKB-KW"/>
</dbReference>
<dbReference type="GO" id="GO:0006310">
    <property type="term" value="P:DNA recombination"/>
    <property type="evidence" value="ECO:0007669"/>
    <property type="project" value="UniProtKB-KW"/>
</dbReference>
<dbReference type="InterPro" id="IPR010183">
    <property type="entry name" value="Phage_lambda_Bet"/>
</dbReference>
<dbReference type="InterPro" id="IPR018330">
    <property type="entry name" value="RecT_fam"/>
</dbReference>
<dbReference type="NCBIfam" id="TIGR01913">
    <property type="entry name" value="bet_lambda"/>
    <property type="match status" value="1"/>
</dbReference>
<dbReference type="Pfam" id="PF03837">
    <property type="entry name" value="RecT"/>
    <property type="match status" value="1"/>
</dbReference>
<name>VBET_LAMBD</name>
<keyword id="KW-0002">3D-structure</keyword>
<keyword id="KW-0233">DNA recombination</keyword>
<keyword id="KW-0238">DNA-binding</keyword>
<keyword id="KW-1185">Reference proteome</keyword>
<comment type="function">
    <text>Gene bet protein functions in general recombination and in the late, rolling-circle mode of lambda DNA replication. Has a function similar to that of E.coli recT. It is a single-stranded DNA binding protein that can promote renaturation of DNA.</text>
</comment>
<protein>
    <recommendedName>
        <fullName>Recombination protein bet</fullName>
    </recommendedName>
</protein>
<feature type="chain" id="PRO_0000077596" description="Recombination protein bet">
    <location>
        <begin position="1"/>
        <end position="261"/>
    </location>
</feature>
<feature type="helix" evidence="1">
    <location>
        <begin position="4"/>
        <end position="15"/>
    </location>
</feature>
<feature type="helix" evidence="1">
    <location>
        <begin position="23"/>
        <end position="34"/>
    </location>
</feature>
<feature type="helix" evidence="1">
    <location>
        <begin position="41"/>
        <end position="54"/>
    </location>
</feature>
<feature type="turn" evidence="1">
    <location>
        <begin position="58"/>
        <end position="61"/>
    </location>
</feature>
<feature type="strand" evidence="1">
    <location>
        <begin position="62"/>
        <end position="67"/>
    </location>
</feature>
<feature type="helix" evidence="1">
    <location>
        <begin position="69"/>
        <end position="71"/>
    </location>
</feature>
<feature type="strand" evidence="1">
    <location>
        <begin position="73"/>
        <end position="77"/>
    </location>
</feature>
<feature type="helix" evidence="1">
    <location>
        <begin position="79"/>
        <end position="87"/>
    </location>
</feature>
<feature type="strand" evidence="1">
    <location>
        <begin position="92"/>
        <end position="99"/>
    </location>
</feature>
<feature type="strand" evidence="1">
    <location>
        <begin position="101"/>
        <end position="112"/>
    </location>
</feature>
<feature type="strand" evidence="1">
    <location>
        <begin position="117"/>
        <end position="122"/>
    </location>
</feature>
<feature type="helix" evidence="1">
    <location>
        <begin position="123"/>
        <end position="126"/>
    </location>
</feature>
<feature type="helix" evidence="1">
    <location>
        <begin position="142"/>
        <end position="145"/>
    </location>
</feature>
<feature type="helix" evidence="1">
    <location>
        <begin position="147"/>
        <end position="163"/>
    </location>
</feature>
<feature type="turn" evidence="1">
    <location>
        <begin position="164"/>
        <end position="168"/>
    </location>
</feature>
<feature type="helix" evidence="2">
    <location>
        <begin position="199"/>
        <end position="211"/>
    </location>
</feature>
<feature type="turn" evidence="2">
    <location>
        <begin position="216"/>
        <end position="219"/>
    </location>
</feature>
<feature type="helix" evidence="2">
    <location>
        <begin position="220"/>
        <end position="228"/>
    </location>
</feature>
<feature type="helix" evidence="2">
    <location>
        <begin position="235"/>
        <end position="237"/>
    </location>
</feature>
<feature type="helix" evidence="2">
    <location>
        <begin position="240"/>
        <end position="256"/>
    </location>
</feature>
<proteinExistence type="evidence at protein level"/>
<accession>P03698</accession>